<reference key="1">
    <citation type="journal article" date="2011" name="Plant Cell">
        <title>Transcriptional programming and functional interactions within the Phytophthora sojae RXLR effector repertoire.</title>
        <authorList>
            <person name="Wang Q."/>
            <person name="Han C."/>
            <person name="Ferreira A.O."/>
            <person name="Yu X."/>
            <person name="Ye W."/>
            <person name="Tripathy S."/>
            <person name="Kale S.D."/>
            <person name="Gu B."/>
            <person name="Sheng Y."/>
            <person name="Sui Y."/>
            <person name="Wang X."/>
            <person name="Zhang Z."/>
            <person name="Cheng B."/>
            <person name="Dong S."/>
            <person name="Shan W."/>
            <person name="Zheng X."/>
            <person name="Dou D."/>
            <person name="Tyler B.M."/>
            <person name="Wang Y."/>
        </authorList>
    </citation>
    <scope>NUCLEOTIDE SEQUENCE [GENOMIC DNA]</scope>
    <scope>IDENTIFICATION</scope>
    <scope>DOMAIN</scope>
    <source>
        <strain>P7064</strain>
        <strain>P7074</strain>
        <strain>P7076</strain>
    </source>
</reference>
<reference key="2">
    <citation type="journal article" date="2016" name="Nat. Commun.">
        <title>A Phytophthora sojae effector suppresses endoplasmic reticulum stress-mediated immunity by stabilizing plant Binding immunoglobulin Proteins.</title>
        <authorList>
            <person name="Jing M."/>
            <person name="Guo B."/>
            <person name="Li H."/>
            <person name="Yang B."/>
            <person name="Wang H."/>
            <person name="Kong G."/>
            <person name="Zhao Y."/>
            <person name="Xu H."/>
            <person name="Wang Y."/>
            <person name="Ye W."/>
            <person name="Dong S."/>
            <person name="Qiao Y."/>
            <person name="Tyler B.M."/>
            <person name="Ma W."/>
            <person name="Wang Y."/>
        </authorList>
    </citation>
    <scope>FUNCTION</scope>
    <scope>DISRUPTION PHENOTYPE</scope>
    <scope>DOMAIN</scope>
    <scope>MUTAGENESIS OF 60-LEU--THR-82</scope>
    <scope>INTERACTION WITH HOST BIP1; BIP2; BIP3 AND BIP4</scope>
    <scope>SUBCELLULAR LOCATION</scope>
</reference>
<proteinExistence type="evidence at protein level"/>
<sequence length="123" mass="13259">MLPVAVVLVVFAVAVTSAESIHQVNPLPRRRRLKGTEEKGHHTNVNDEERVISLESASDLISKLKVKINAKLLAGDSAKPATLSKAQVASVAKEVVKEVKKTPKVWPPPMIKKGVRRGAGGVR</sequence>
<dbReference type="EMBL" id="JN254251">
    <property type="protein sequence ID" value="AEK81064.1"/>
    <property type="molecule type" value="Genomic_DNA"/>
</dbReference>
<dbReference type="EMBL" id="JN254252">
    <property type="protein sequence ID" value="AEK81065.1"/>
    <property type="molecule type" value="Genomic_DNA"/>
</dbReference>
<dbReference type="EMBL" id="JN254253">
    <property type="protein sequence ID" value="AEK81066.1"/>
    <property type="molecule type" value="Genomic_DNA"/>
</dbReference>
<dbReference type="RefSeq" id="XP_009535769.1">
    <property type="nucleotide sequence ID" value="XM_009537474.1"/>
</dbReference>
<dbReference type="SMR" id="E0W5H5"/>
<dbReference type="KEGG" id="psoj:PHYSODRAFT_288708"/>
<dbReference type="VEuPathDB" id="FungiDB:PHYSODRAFT_288708"/>
<dbReference type="HOGENOM" id="CLU_1963950_0_0_1"/>
<dbReference type="GO" id="GO:0005576">
    <property type="term" value="C:extracellular region"/>
    <property type="evidence" value="ECO:0007669"/>
    <property type="project" value="UniProtKB-SubCell"/>
</dbReference>
<dbReference type="GO" id="GO:0044165">
    <property type="term" value="C:host cell endoplasmic reticulum"/>
    <property type="evidence" value="ECO:0007669"/>
    <property type="project" value="UniProtKB-SubCell"/>
</dbReference>
<accession>E0W5H5</accession>
<gene>
    <name evidence="5" type="primary">Avh262</name>
</gene>
<protein>
    <recommendedName>
        <fullName evidence="5">RxLR effector protein Avh262</fullName>
    </recommendedName>
    <alternativeName>
        <fullName evidence="5">Avirulence homolog protein 262</fullName>
    </alternativeName>
</protein>
<evidence type="ECO:0000255" key="1"/>
<evidence type="ECO:0000256" key="2">
    <source>
        <dbReference type="SAM" id="MobiDB-lite"/>
    </source>
</evidence>
<evidence type="ECO:0000269" key="3">
    <source>
    </source>
</evidence>
<evidence type="ECO:0000269" key="4">
    <source>
    </source>
</evidence>
<evidence type="ECO:0000303" key="5">
    <source>
    </source>
</evidence>
<evidence type="ECO:0000305" key="6"/>
<evidence type="ECO:0000305" key="7">
    <source>
    </source>
</evidence>
<organism>
    <name type="scientific">Phytophthora sojae</name>
    <name type="common">Soybean stem and root rot agent</name>
    <name type="synonym">Phytophthora megasperma f. sp. glycines</name>
    <dbReference type="NCBI Taxonomy" id="67593"/>
    <lineage>
        <taxon>Eukaryota</taxon>
        <taxon>Sar</taxon>
        <taxon>Stramenopiles</taxon>
        <taxon>Oomycota</taxon>
        <taxon>Peronosporales</taxon>
        <taxon>Peronosporaceae</taxon>
        <taxon>Phytophthora</taxon>
    </lineage>
</organism>
<name>AV262_PHYSO</name>
<comment type="function">
    <text evidence="3 4">Effector that suppresses plant defense responses during the early stages of pathogen infection. Suppresses cell death induced by effectors and PAMPs in plant hosts (PubMed:21653195, PubMed:27256489). Avh262 stabilizes endoplasmic reticulum (ER)-luminal binding immunoglobulin proteins (BiPs), which act as negative regulators of plant resistance to Phytophthora. By stabilizing BiPs, Avh262 suppresses ER stress-triggered cell death and facilitates Phytophthora infection (PubMed:27256489).</text>
</comment>
<comment type="subunit">
    <text evidence="4">Interacts with host plant ER-luminal binding immunoglobulin proteins (BiPs) such as soybean BiP1, BiP2, BiP3 and BiP4.</text>
</comment>
<comment type="subcellular location">
    <subcellularLocation>
        <location evidence="4">Secreted</location>
    </subcellularLocation>
    <subcellularLocation>
        <location evidence="4">Host endoplasmic reticulum</location>
    </subcellularLocation>
</comment>
<comment type="domain">
    <text evidence="4">Residues 60 to 82 are required for the interaction with host plant binding immunoglobulin proteins (BiPs) and subsequent virulence.</text>
</comment>
<comment type="domain">
    <text evidence="7">The RxLR-dEER motif acts to carry the protein into the host cell cytoplasm through binding to cell surface phosphatidylinositol-3-phosphate.</text>
</comment>
<comment type="disruption phenotype">
    <text evidence="4">Leads to reduced virulence on etiolated soybean seedlings.</text>
</comment>
<comment type="similarity">
    <text evidence="6">Belongs to the RxLR effector family.</text>
</comment>
<keyword id="KW-1038">Host endoplasmic reticulum</keyword>
<keyword id="KW-0964">Secreted</keyword>
<keyword id="KW-0732">Signal</keyword>
<keyword id="KW-0843">Virulence</keyword>
<feature type="signal peptide" evidence="1">
    <location>
        <begin position="1"/>
        <end position="18"/>
    </location>
</feature>
<feature type="chain" id="PRO_5007652769" description="RxLR effector protein Avh262">
    <location>
        <begin position="19"/>
        <end position="123"/>
    </location>
</feature>
<feature type="region of interest" description="Disordered" evidence="2">
    <location>
        <begin position="24"/>
        <end position="46"/>
    </location>
</feature>
<feature type="region of interest" description="BiP-binding" evidence="4">
    <location>
        <begin position="60"/>
        <end position="82"/>
    </location>
</feature>
<feature type="short sequence motif" description="RxLR-dEER" evidence="7">
    <location>
        <begin position="30"/>
        <end position="50"/>
    </location>
</feature>
<feature type="compositionally biased region" description="Basic and acidic residues" evidence="2">
    <location>
        <begin position="34"/>
        <end position="46"/>
    </location>
</feature>